<name>Y754_PSYIN</name>
<accession>A1SSZ1</accession>
<proteinExistence type="inferred from homology"/>
<sequence>MTIWIDADACPVPVREMVLRAGQRTATALVFVANSPLPVPRRALVKTVQVAQGFDVADNYISQHAVINDLVITQDIPLAAEIVEKGITALNPRGELYTEANIRQRLAMRNLSEELRSMGQISGGPNKFGDKEKQNFANALDRWLQKAKKTT</sequence>
<protein>
    <recommendedName>
        <fullName evidence="1">UPF0178 protein Ping_0754</fullName>
    </recommendedName>
</protein>
<dbReference type="EMBL" id="CP000510">
    <property type="protein sequence ID" value="ABM02606.1"/>
    <property type="molecule type" value="Genomic_DNA"/>
</dbReference>
<dbReference type="RefSeq" id="WP_011769165.1">
    <property type="nucleotide sequence ID" value="NC_008709.1"/>
</dbReference>
<dbReference type="SMR" id="A1SSZ1"/>
<dbReference type="KEGG" id="pin:Ping_0754"/>
<dbReference type="eggNOG" id="COG1671">
    <property type="taxonomic scope" value="Bacteria"/>
</dbReference>
<dbReference type="HOGENOM" id="CLU_106619_2_1_6"/>
<dbReference type="OrthoDB" id="9798918at2"/>
<dbReference type="Proteomes" id="UP000000639">
    <property type="component" value="Chromosome"/>
</dbReference>
<dbReference type="CDD" id="cd18720">
    <property type="entry name" value="PIN_YqxD-like"/>
    <property type="match status" value="1"/>
</dbReference>
<dbReference type="HAMAP" id="MF_00489">
    <property type="entry name" value="UPF0178"/>
    <property type="match status" value="1"/>
</dbReference>
<dbReference type="InterPro" id="IPR003791">
    <property type="entry name" value="UPF0178"/>
</dbReference>
<dbReference type="NCBIfam" id="NF001095">
    <property type="entry name" value="PRK00124.1"/>
    <property type="match status" value="1"/>
</dbReference>
<dbReference type="PANTHER" id="PTHR35146">
    <property type="entry name" value="UPF0178 PROTEIN YAII"/>
    <property type="match status" value="1"/>
</dbReference>
<dbReference type="PANTHER" id="PTHR35146:SF1">
    <property type="entry name" value="UPF0178 PROTEIN YAII"/>
    <property type="match status" value="1"/>
</dbReference>
<dbReference type="Pfam" id="PF02639">
    <property type="entry name" value="DUF188"/>
    <property type="match status" value="1"/>
</dbReference>
<evidence type="ECO:0000255" key="1">
    <source>
        <dbReference type="HAMAP-Rule" id="MF_00489"/>
    </source>
</evidence>
<comment type="similarity">
    <text evidence="1">Belongs to the UPF0178 family.</text>
</comment>
<keyword id="KW-1185">Reference proteome</keyword>
<feature type="chain" id="PRO_1000014435" description="UPF0178 protein Ping_0754">
    <location>
        <begin position="1"/>
        <end position="151"/>
    </location>
</feature>
<organism>
    <name type="scientific">Psychromonas ingrahamii (strain DSM 17664 / CCUG 51855 / 37)</name>
    <dbReference type="NCBI Taxonomy" id="357804"/>
    <lineage>
        <taxon>Bacteria</taxon>
        <taxon>Pseudomonadati</taxon>
        <taxon>Pseudomonadota</taxon>
        <taxon>Gammaproteobacteria</taxon>
        <taxon>Alteromonadales</taxon>
        <taxon>Psychromonadaceae</taxon>
        <taxon>Psychromonas</taxon>
    </lineage>
</organism>
<reference key="1">
    <citation type="journal article" date="2008" name="BMC Genomics">
        <title>Genomics of an extreme psychrophile, Psychromonas ingrahamii.</title>
        <authorList>
            <person name="Riley M."/>
            <person name="Staley J.T."/>
            <person name="Danchin A."/>
            <person name="Wang T.Z."/>
            <person name="Brettin T.S."/>
            <person name="Hauser L.J."/>
            <person name="Land M.L."/>
            <person name="Thompson L.S."/>
        </authorList>
    </citation>
    <scope>NUCLEOTIDE SEQUENCE [LARGE SCALE GENOMIC DNA]</scope>
    <source>
        <strain>DSM 17664 / CCUG 51855 / 37</strain>
    </source>
</reference>
<gene>
    <name type="ordered locus">Ping_0754</name>
</gene>